<comment type="catalytic activity">
    <reaction evidence="1">
        <text>tRNA(Phe) + L-phenylalanine + ATP = L-phenylalanyl-tRNA(Phe) + AMP + diphosphate + H(+)</text>
        <dbReference type="Rhea" id="RHEA:19413"/>
        <dbReference type="Rhea" id="RHEA-COMP:9668"/>
        <dbReference type="Rhea" id="RHEA-COMP:9699"/>
        <dbReference type="ChEBI" id="CHEBI:15378"/>
        <dbReference type="ChEBI" id="CHEBI:30616"/>
        <dbReference type="ChEBI" id="CHEBI:33019"/>
        <dbReference type="ChEBI" id="CHEBI:58095"/>
        <dbReference type="ChEBI" id="CHEBI:78442"/>
        <dbReference type="ChEBI" id="CHEBI:78531"/>
        <dbReference type="ChEBI" id="CHEBI:456215"/>
        <dbReference type="EC" id="6.1.1.20"/>
    </reaction>
</comment>
<comment type="cofactor">
    <cofactor evidence="1">
        <name>Mg(2+)</name>
        <dbReference type="ChEBI" id="CHEBI:18420"/>
    </cofactor>
</comment>
<comment type="subunit">
    <text evidence="1">Tetramer of two alpha and two beta subunits.</text>
</comment>
<comment type="subcellular location">
    <subcellularLocation>
        <location evidence="1">Cytoplasm</location>
    </subcellularLocation>
</comment>
<comment type="similarity">
    <text evidence="1">Belongs to the phenylalanyl-tRNA synthetase beta subunit family. Type 2 subfamily.</text>
</comment>
<accession>Q6LXU2</accession>
<name>SYFB_METMP</name>
<dbReference type="EC" id="6.1.1.20" evidence="1"/>
<dbReference type="EMBL" id="BX950229">
    <property type="protein sequence ID" value="CAF30811.1"/>
    <property type="molecule type" value="Genomic_DNA"/>
</dbReference>
<dbReference type="RefSeq" id="WP_011171199.1">
    <property type="nucleotide sequence ID" value="NC_005791.1"/>
</dbReference>
<dbReference type="SMR" id="Q6LXU2"/>
<dbReference type="STRING" id="267377.MMP1255"/>
<dbReference type="EnsemblBacteria" id="CAF30811">
    <property type="protein sequence ID" value="CAF30811"/>
    <property type="gene ID" value="MMP1255"/>
</dbReference>
<dbReference type="GeneID" id="2762610"/>
<dbReference type="KEGG" id="mmp:MMP1255"/>
<dbReference type="PATRIC" id="fig|267377.15.peg.1288"/>
<dbReference type="eggNOG" id="arCOG00412">
    <property type="taxonomic scope" value="Archaea"/>
</dbReference>
<dbReference type="HOGENOM" id="CLU_020279_3_0_2"/>
<dbReference type="OrthoDB" id="10073at2157"/>
<dbReference type="Proteomes" id="UP000000590">
    <property type="component" value="Chromosome"/>
</dbReference>
<dbReference type="GO" id="GO:0009328">
    <property type="term" value="C:phenylalanine-tRNA ligase complex"/>
    <property type="evidence" value="ECO:0007669"/>
    <property type="project" value="TreeGrafter"/>
</dbReference>
<dbReference type="GO" id="GO:0005524">
    <property type="term" value="F:ATP binding"/>
    <property type="evidence" value="ECO:0007669"/>
    <property type="project" value="UniProtKB-UniRule"/>
</dbReference>
<dbReference type="GO" id="GO:0000287">
    <property type="term" value="F:magnesium ion binding"/>
    <property type="evidence" value="ECO:0007669"/>
    <property type="project" value="InterPro"/>
</dbReference>
<dbReference type="GO" id="GO:0004826">
    <property type="term" value="F:phenylalanine-tRNA ligase activity"/>
    <property type="evidence" value="ECO:0007669"/>
    <property type="project" value="UniProtKB-UniRule"/>
</dbReference>
<dbReference type="GO" id="GO:0003723">
    <property type="term" value="F:RNA binding"/>
    <property type="evidence" value="ECO:0007669"/>
    <property type="project" value="InterPro"/>
</dbReference>
<dbReference type="GO" id="GO:0006432">
    <property type="term" value="P:phenylalanyl-tRNA aminoacylation"/>
    <property type="evidence" value="ECO:0007669"/>
    <property type="project" value="UniProtKB-UniRule"/>
</dbReference>
<dbReference type="CDD" id="cd00769">
    <property type="entry name" value="PheRS_beta_core"/>
    <property type="match status" value="1"/>
</dbReference>
<dbReference type="FunFam" id="3.50.40.10:FF:000003">
    <property type="entry name" value="Phenylalanine--tRNA ligase beta subunit"/>
    <property type="match status" value="1"/>
</dbReference>
<dbReference type="Gene3D" id="3.30.56.10">
    <property type="match status" value="2"/>
</dbReference>
<dbReference type="Gene3D" id="3.30.930.10">
    <property type="entry name" value="Bira Bifunctional Protein, Domain 2"/>
    <property type="match status" value="1"/>
</dbReference>
<dbReference type="Gene3D" id="3.50.40.10">
    <property type="entry name" value="Phenylalanyl-trna Synthetase, Chain B, domain 3"/>
    <property type="match status" value="1"/>
</dbReference>
<dbReference type="HAMAP" id="MF_00284">
    <property type="entry name" value="Phe_tRNA_synth_beta2"/>
    <property type="match status" value="1"/>
</dbReference>
<dbReference type="InterPro" id="IPR045864">
    <property type="entry name" value="aa-tRNA-synth_II/BPL/LPL"/>
</dbReference>
<dbReference type="InterPro" id="IPR005146">
    <property type="entry name" value="B3/B4_tRNA-bd"/>
</dbReference>
<dbReference type="InterPro" id="IPR009061">
    <property type="entry name" value="DNA-bd_dom_put_sf"/>
</dbReference>
<dbReference type="InterPro" id="IPR045060">
    <property type="entry name" value="Phe-tRNA-ligase_IIc_bsu"/>
</dbReference>
<dbReference type="InterPro" id="IPR004531">
    <property type="entry name" value="Phe-tRNA-synth_IIc_bsu_arc_euk"/>
</dbReference>
<dbReference type="InterPro" id="IPR020825">
    <property type="entry name" value="Phe-tRNA_synthase-like_B3/B4"/>
</dbReference>
<dbReference type="InterPro" id="IPR022918">
    <property type="entry name" value="Phe_tRNA_ligase_beta2_arc"/>
</dbReference>
<dbReference type="InterPro" id="IPR041616">
    <property type="entry name" value="PheRS_beta_core"/>
</dbReference>
<dbReference type="InterPro" id="IPR040659">
    <property type="entry name" value="PhetRS_B1"/>
</dbReference>
<dbReference type="InterPro" id="IPR005147">
    <property type="entry name" value="tRNA_synthase_B5-dom"/>
</dbReference>
<dbReference type="NCBIfam" id="TIGR00471">
    <property type="entry name" value="pheT_arch"/>
    <property type="match status" value="1"/>
</dbReference>
<dbReference type="PANTHER" id="PTHR10947:SF0">
    <property type="entry name" value="PHENYLALANINE--TRNA LIGASE BETA SUBUNIT"/>
    <property type="match status" value="1"/>
</dbReference>
<dbReference type="PANTHER" id="PTHR10947">
    <property type="entry name" value="PHENYLALANYL-TRNA SYNTHETASE BETA CHAIN AND LEUCINE-RICH REPEAT-CONTAINING PROTEIN 47"/>
    <property type="match status" value="1"/>
</dbReference>
<dbReference type="Pfam" id="PF03483">
    <property type="entry name" value="B3_4"/>
    <property type="match status" value="1"/>
</dbReference>
<dbReference type="Pfam" id="PF03484">
    <property type="entry name" value="B5"/>
    <property type="match status" value="1"/>
</dbReference>
<dbReference type="Pfam" id="PF18262">
    <property type="entry name" value="PhetRS_B1"/>
    <property type="match status" value="1"/>
</dbReference>
<dbReference type="Pfam" id="PF17759">
    <property type="entry name" value="tRNA_synthFbeta"/>
    <property type="match status" value="1"/>
</dbReference>
<dbReference type="SMART" id="SM00873">
    <property type="entry name" value="B3_4"/>
    <property type="match status" value="1"/>
</dbReference>
<dbReference type="SMART" id="SM00874">
    <property type="entry name" value="B5"/>
    <property type="match status" value="1"/>
</dbReference>
<dbReference type="SUPFAM" id="SSF55681">
    <property type="entry name" value="Class II aaRS and biotin synthetases"/>
    <property type="match status" value="1"/>
</dbReference>
<dbReference type="SUPFAM" id="SSF46955">
    <property type="entry name" value="Putative DNA-binding domain"/>
    <property type="match status" value="2"/>
</dbReference>
<dbReference type="PROSITE" id="PS51483">
    <property type="entry name" value="B5"/>
    <property type="match status" value="1"/>
</dbReference>
<sequence>MPTINVNKVDLERLSNISLSDKLIEDRFPMMGVEVEEIFEEVDKNGKKQNMVQFSINPDRPDYLSVEGLARGFRGFMGITTGIQEFEVLDSDIKVTVEENETRPYVAFALVKNVLMDEFVLESMINLQEKLHWAIGRDRKKLAIGIHDFDKVKAPFTYKEIKGDEIKFVPLGYEDEEMTPREIIEKHEKGIKYAHLIQNDKFPIILDANGEVLSLPPIINGTLTKVTPTSKNLLIDITGTEKEAVEETLNIIVCALVERRGTIVSVNVNGKKYPDLTPKSRIISVESINKKLGLNLNPGEIIQALKKSGMDALYEDGNLIVKIPAYRNDILQNVDLKEEIAINYGYEKFDGKLPSVATTGSKDPVEKKCSAMSDLMIGLGFYEVMNLTLSNQDTLFEKMNLKVDEKDYIEVLKPASIEHRVLRTSILPLLLETLYINKHNALPQKIFEVGDCVVIDEEDTETDTKCKNIKKIAGAITHPLTNFNEIKSSTEALLREFFEGFEFENYEHPAFIPGRCAKILKSGKEVGFFGEIHPEVILNFELEHPVVGFEITIE</sequence>
<evidence type="ECO:0000255" key="1">
    <source>
        <dbReference type="HAMAP-Rule" id="MF_00284"/>
    </source>
</evidence>
<feature type="chain" id="PRO_1000022425" description="Phenylalanine--tRNA ligase beta subunit">
    <location>
        <begin position="1"/>
        <end position="554"/>
    </location>
</feature>
<feature type="domain" description="B5" evidence="1">
    <location>
        <begin position="276"/>
        <end position="351"/>
    </location>
</feature>
<feature type="binding site" evidence="1">
    <location>
        <position position="329"/>
    </location>
    <ligand>
        <name>Mg(2+)</name>
        <dbReference type="ChEBI" id="CHEBI:18420"/>
        <note>shared with alpha subunit</note>
    </ligand>
</feature>
<feature type="binding site" evidence="1">
    <location>
        <position position="335"/>
    </location>
    <ligand>
        <name>Mg(2+)</name>
        <dbReference type="ChEBI" id="CHEBI:18420"/>
        <note>shared with alpha subunit</note>
    </ligand>
</feature>
<feature type="binding site" evidence="1">
    <location>
        <position position="338"/>
    </location>
    <ligand>
        <name>Mg(2+)</name>
        <dbReference type="ChEBI" id="CHEBI:18420"/>
        <note>shared with alpha subunit</note>
    </ligand>
</feature>
<feature type="binding site" evidence="1">
    <location>
        <position position="339"/>
    </location>
    <ligand>
        <name>Mg(2+)</name>
        <dbReference type="ChEBI" id="CHEBI:18420"/>
        <note>shared with alpha subunit</note>
    </ligand>
</feature>
<protein>
    <recommendedName>
        <fullName evidence="1">Phenylalanine--tRNA ligase beta subunit</fullName>
        <ecNumber evidence="1">6.1.1.20</ecNumber>
    </recommendedName>
    <alternativeName>
        <fullName evidence="1">Phenylalanyl-tRNA synthetase beta subunit</fullName>
        <shortName evidence="1">PheRS</shortName>
    </alternativeName>
</protein>
<gene>
    <name evidence="1" type="primary">pheT</name>
    <name type="ordered locus">MMP1255</name>
</gene>
<proteinExistence type="inferred from homology"/>
<reference key="1">
    <citation type="journal article" date="2004" name="J. Bacteriol.">
        <title>Complete genome sequence of the genetically tractable hydrogenotrophic methanogen Methanococcus maripaludis.</title>
        <authorList>
            <person name="Hendrickson E.L."/>
            <person name="Kaul R."/>
            <person name="Zhou Y."/>
            <person name="Bovee D."/>
            <person name="Chapman P."/>
            <person name="Chung J."/>
            <person name="Conway de Macario E."/>
            <person name="Dodsworth J.A."/>
            <person name="Gillett W."/>
            <person name="Graham D.E."/>
            <person name="Hackett M."/>
            <person name="Haydock A.K."/>
            <person name="Kang A."/>
            <person name="Land M.L."/>
            <person name="Levy R."/>
            <person name="Lie T.J."/>
            <person name="Major T.A."/>
            <person name="Moore B.C."/>
            <person name="Porat I."/>
            <person name="Palmeiri A."/>
            <person name="Rouse G."/>
            <person name="Saenphimmachak C."/>
            <person name="Soell D."/>
            <person name="Van Dien S."/>
            <person name="Wang T."/>
            <person name="Whitman W.B."/>
            <person name="Xia Q."/>
            <person name="Zhang Y."/>
            <person name="Larimer F.W."/>
            <person name="Olson M.V."/>
            <person name="Leigh J.A."/>
        </authorList>
    </citation>
    <scope>NUCLEOTIDE SEQUENCE [LARGE SCALE GENOMIC DNA]</scope>
    <source>
        <strain>DSM 14266 / JCM 13030 / NBRC 101832 / S2 / LL</strain>
    </source>
</reference>
<organism>
    <name type="scientific">Methanococcus maripaludis (strain DSM 14266 / JCM 13030 / NBRC 101832 / S2 / LL)</name>
    <dbReference type="NCBI Taxonomy" id="267377"/>
    <lineage>
        <taxon>Archaea</taxon>
        <taxon>Methanobacteriati</taxon>
        <taxon>Methanobacteriota</taxon>
        <taxon>Methanomada group</taxon>
        <taxon>Methanococci</taxon>
        <taxon>Methanococcales</taxon>
        <taxon>Methanococcaceae</taxon>
        <taxon>Methanococcus</taxon>
    </lineage>
</organism>
<keyword id="KW-0030">Aminoacyl-tRNA synthetase</keyword>
<keyword id="KW-0067">ATP-binding</keyword>
<keyword id="KW-0963">Cytoplasm</keyword>
<keyword id="KW-0436">Ligase</keyword>
<keyword id="KW-0460">Magnesium</keyword>
<keyword id="KW-0479">Metal-binding</keyword>
<keyword id="KW-0547">Nucleotide-binding</keyword>
<keyword id="KW-0648">Protein biosynthesis</keyword>
<keyword id="KW-1185">Reference proteome</keyword>